<gene>
    <name type="ordered locus">aq_1017</name>
</gene>
<organism>
    <name type="scientific">Aquifex aeolicus (strain VF5)</name>
    <dbReference type="NCBI Taxonomy" id="224324"/>
    <lineage>
        <taxon>Bacteria</taxon>
        <taxon>Pseudomonadati</taxon>
        <taxon>Aquificota</taxon>
        <taxon>Aquificia</taxon>
        <taxon>Aquificales</taxon>
        <taxon>Aquificaceae</taxon>
        <taxon>Aquifex</taxon>
    </lineage>
</organism>
<keyword id="KW-1185">Reference proteome</keyword>
<reference key="1">
    <citation type="journal article" date="1998" name="Nature">
        <title>The complete genome of the hyperthermophilic bacterium Aquifex aeolicus.</title>
        <authorList>
            <person name="Deckert G."/>
            <person name="Warren P.V."/>
            <person name="Gaasterland T."/>
            <person name="Young W.G."/>
            <person name="Lenox A.L."/>
            <person name="Graham D.E."/>
            <person name="Overbeek R."/>
            <person name="Snead M.A."/>
            <person name="Keller M."/>
            <person name="Aujay M."/>
            <person name="Huber R."/>
            <person name="Feldman R.A."/>
            <person name="Short J.M."/>
            <person name="Olsen G.J."/>
            <person name="Swanson R.V."/>
        </authorList>
    </citation>
    <scope>NUCLEOTIDE SEQUENCE [LARGE SCALE GENOMIC DNA]</scope>
    <source>
        <strain>VF5</strain>
    </source>
</reference>
<sequence length="135" mass="15572">MDTKNFYRLDDGSGKYELWIWKGFDEQFEKVTKGDTKSRKKILTWIERLSHGIPTQPEKAKVLKGNACKGLSGPVMELKPKPYRVSFICLCNKYILVGTIWRKRANSRDSSEIDKACKLMKELVEMFLKEAGTCC</sequence>
<feature type="chain" id="PRO_0000186894" description="Uncharacterized protein aq_1017">
    <location>
        <begin position="1"/>
        <end position="135"/>
    </location>
</feature>
<protein>
    <recommendedName>
        <fullName>Uncharacterized protein aq_1017</fullName>
    </recommendedName>
</protein>
<accession>O67130</accession>
<proteinExistence type="predicted"/>
<name>Y1017_AQUAE</name>
<dbReference type="EMBL" id="AE000657">
    <property type="protein sequence ID" value="AAC07090.1"/>
    <property type="molecule type" value="Genomic_DNA"/>
</dbReference>
<dbReference type="PIR" id="G70387">
    <property type="entry name" value="G70387"/>
</dbReference>
<dbReference type="RefSeq" id="NP_213693.1">
    <property type="nucleotide sequence ID" value="NC_000918.1"/>
</dbReference>
<dbReference type="RefSeq" id="WP_010880631.1">
    <property type="nucleotide sequence ID" value="NC_000918.1"/>
</dbReference>
<dbReference type="SMR" id="O67130"/>
<dbReference type="STRING" id="224324.aq_1017"/>
<dbReference type="EnsemblBacteria" id="AAC07090">
    <property type="protein sequence ID" value="AAC07090"/>
    <property type="gene ID" value="aq_1017"/>
</dbReference>
<dbReference type="KEGG" id="aae:aq_1017"/>
<dbReference type="HOGENOM" id="CLU_1881442_0_0_0"/>
<dbReference type="InParanoid" id="O67130"/>
<dbReference type="Proteomes" id="UP000000798">
    <property type="component" value="Chromosome"/>
</dbReference>